<dbReference type="EMBL" id="AF469738">
    <property type="protein sequence ID" value="AAQ05286.1"/>
    <property type="molecule type" value="Genomic_DNA"/>
</dbReference>
<dbReference type="RefSeq" id="YP_009113795.1">
    <property type="nucleotide sequence ID" value="NC_026041.1"/>
</dbReference>
<dbReference type="RefSeq" id="YP_009113809.1">
    <property type="nucleotide sequence ID" value="NC_026041.1"/>
</dbReference>
<dbReference type="SMR" id="Q71L19"/>
<dbReference type="GeneID" id="23525906"/>
<dbReference type="GeneID" id="23526012"/>
<dbReference type="GO" id="GO:0009507">
    <property type="term" value="C:chloroplast"/>
    <property type="evidence" value="ECO:0007669"/>
    <property type="project" value="UniProtKB-SubCell"/>
</dbReference>
<dbReference type="GO" id="GO:0015935">
    <property type="term" value="C:small ribosomal subunit"/>
    <property type="evidence" value="ECO:0007669"/>
    <property type="project" value="InterPro"/>
</dbReference>
<dbReference type="GO" id="GO:0019843">
    <property type="term" value="F:rRNA binding"/>
    <property type="evidence" value="ECO:0007669"/>
    <property type="project" value="UniProtKB-UniRule"/>
</dbReference>
<dbReference type="GO" id="GO:0003735">
    <property type="term" value="F:structural constituent of ribosome"/>
    <property type="evidence" value="ECO:0007669"/>
    <property type="project" value="InterPro"/>
</dbReference>
<dbReference type="GO" id="GO:0006412">
    <property type="term" value="P:translation"/>
    <property type="evidence" value="ECO:0007669"/>
    <property type="project" value="UniProtKB-UniRule"/>
</dbReference>
<dbReference type="CDD" id="cd14871">
    <property type="entry name" value="uS7_Chloroplast"/>
    <property type="match status" value="1"/>
</dbReference>
<dbReference type="FunFam" id="1.10.455.10:FF:000001">
    <property type="entry name" value="30S ribosomal protein S7"/>
    <property type="match status" value="1"/>
</dbReference>
<dbReference type="Gene3D" id="1.10.455.10">
    <property type="entry name" value="Ribosomal protein S7 domain"/>
    <property type="match status" value="1"/>
</dbReference>
<dbReference type="HAMAP" id="MF_00480_B">
    <property type="entry name" value="Ribosomal_uS7_B"/>
    <property type="match status" value="1"/>
</dbReference>
<dbReference type="InterPro" id="IPR000235">
    <property type="entry name" value="Ribosomal_uS7"/>
</dbReference>
<dbReference type="InterPro" id="IPR005717">
    <property type="entry name" value="Ribosomal_uS7_bac/org-type"/>
</dbReference>
<dbReference type="InterPro" id="IPR020606">
    <property type="entry name" value="Ribosomal_uS7_CS"/>
</dbReference>
<dbReference type="InterPro" id="IPR023798">
    <property type="entry name" value="Ribosomal_uS7_dom"/>
</dbReference>
<dbReference type="InterPro" id="IPR036823">
    <property type="entry name" value="Ribosomal_uS7_dom_sf"/>
</dbReference>
<dbReference type="NCBIfam" id="TIGR01029">
    <property type="entry name" value="rpsG_bact"/>
    <property type="match status" value="1"/>
</dbReference>
<dbReference type="PANTHER" id="PTHR11205">
    <property type="entry name" value="RIBOSOMAL PROTEIN S7"/>
    <property type="match status" value="1"/>
</dbReference>
<dbReference type="Pfam" id="PF00177">
    <property type="entry name" value="Ribosomal_S7"/>
    <property type="match status" value="1"/>
</dbReference>
<dbReference type="PIRSF" id="PIRSF002122">
    <property type="entry name" value="RPS7p_RPS7a_RPS5e_RPS7o"/>
    <property type="match status" value="1"/>
</dbReference>
<dbReference type="SUPFAM" id="SSF47973">
    <property type="entry name" value="Ribosomal protein S7"/>
    <property type="match status" value="1"/>
</dbReference>
<dbReference type="PROSITE" id="PS00052">
    <property type="entry name" value="RIBOSOMAL_S7"/>
    <property type="match status" value="1"/>
</dbReference>
<sequence length="156" mass="17990">MSRRSTAEKETAKSDPIYRNRLVNMLVNRILRHGKKSLAYRIIYRAMKNIQQKTEKNPLSVLRQAIRGVTPNVTVKTRRVGGSTYQVPIEIRSTQAKALAIRWLLGASRKRPPGRNMAFKLSYELMDAARENGNAIRKKEETHRMAEANRAFAHFR</sequence>
<accession>Q71L19</accession>
<gene>
    <name type="primary">rps7</name>
</gene>
<organism>
    <name type="scientific">Stangeria eriopus</name>
    <name type="common">Natal grass cycad</name>
    <name type="synonym">Lomaria eriopus</name>
    <dbReference type="NCBI Taxonomy" id="34343"/>
    <lineage>
        <taxon>Eukaryota</taxon>
        <taxon>Viridiplantae</taxon>
        <taxon>Streptophyta</taxon>
        <taxon>Embryophyta</taxon>
        <taxon>Tracheophyta</taxon>
        <taxon>Spermatophyta</taxon>
        <taxon>Cycadidae</taxon>
        <taxon>Cycadales</taxon>
        <taxon>Zamiaceae</taxon>
        <taxon>Stangeria</taxon>
    </lineage>
</organism>
<name>RR7_STAER</name>
<reference key="1">
    <citation type="journal article" date="2003" name="Mol. Phylogenet. Evol.">
        <title>Inference of higher-order relationships in the cycads from a large chloroplast data set.</title>
        <authorList>
            <person name="Rai H.S."/>
            <person name="O'Brien H.E."/>
            <person name="Reeves P.A."/>
            <person name="Olmstead R.G."/>
            <person name="Graham S.W."/>
        </authorList>
    </citation>
    <scope>NUCLEOTIDE SEQUENCE [GENOMIC DNA]</scope>
</reference>
<protein>
    <recommendedName>
        <fullName evidence="2">Small ribosomal subunit protein uS7c</fullName>
    </recommendedName>
    <alternativeName>
        <fullName>30S ribosomal protein S7, chloroplastic</fullName>
    </alternativeName>
</protein>
<evidence type="ECO:0000250" key="1"/>
<evidence type="ECO:0000305" key="2"/>
<comment type="function">
    <text evidence="1">One of the primary rRNA binding proteins, it binds directly to 16S rRNA where it nucleates assembly of the head domain of the 30S subunit.</text>
</comment>
<comment type="subunit">
    <text>Part of the 30S ribosomal subunit.</text>
</comment>
<comment type="subcellular location">
    <subcellularLocation>
        <location>Plastid</location>
        <location>Chloroplast</location>
    </subcellularLocation>
</comment>
<comment type="similarity">
    <text evidence="2">Belongs to the universal ribosomal protein uS7 family.</text>
</comment>
<feature type="chain" id="PRO_0000124510" description="Small ribosomal subunit protein uS7c">
    <location>
        <begin position="1"/>
        <end position="156"/>
    </location>
</feature>
<geneLocation type="chloroplast"/>
<proteinExistence type="inferred from homology"/>
<keyword id="KW-0150">Chloroplast</keyword>
<keyword id="KW-0934">Plastid</keyword>
<keyword id="KW-0687">Ribonucleoprotein</keyword>
<keyword id="KW-0689">Ribosomal protein</keyword>
<keyword id="KW-0694">RNA-binding</keyword>
<keyword id="KW-0699">rRNA-binding</keyword>